<accession>Q38WI8</accession>
<protein>
    <recommendedName>
        <fullName evidence="1">Putative pyruvate, phosphate dikinase regulatory protein 2</fullName>
        <shortName evidence="1">PPDK regulatory protein 2</shortName>
        <ecNumber evidence="1">2.7.11.32</ecNumber>
        <ecNumber evidence="1">2.7.4.27</ecNumber>
    </recommendedName>
</protein>
<keyword id="KW-0418">Kinase</keyword>
<keyword id="KW-0547">Nucleotide-binding</keyword>
<keyword id="KW-1185">Reference proteome</keyword>
<keyword id="KW-0723">Serine/threonine-protein kinase</keyword>
<keyword id="KW-0808">Transferase</keyword>
<evidence type="ECO:0000255" key="1">
    <source>
        <dbReference type="HAMAP-Rule" id="MF_00921"/>
    </source>
</evidence>
<organism>
    <name type="scientific">Latilactobacillus sakei subsp. sakei (strain 23K)</name>
    <name type="common">Lactobacillus sakei subsp. sakei</name>
    <dbReference type="NCBI Taxonomy" id="314315"/>
    <lineage>
        <taxon>Bacteria</taxon>
        <taxon>Bacillati</taxon>
        <taxon>Bacillota</taxon>
        <taxon>Bacilli</taxon>
        <taxon>Lactobacillales</taxon>
        <taxon>Lactobacillaceae</taxon>
        <taxon>Latilactobacillus</taxon>
    </lineage>
</organism>
<sequence>MTAIPIFIISDSIGETARTVIAAVNAQFPASVTLKIQRFPFITDQKTLTPILQDAHQEQAIIVSTLVNHTLQETVTQFCQAKHLTLIDLLSPLTTAISERSQTASLETPGSLRKLDEHYFHRISAMEFAVRYDDGQDPRGLLEADIVLLGVSRTSKTPLSMYLANQNYRVANLPLIPNVPLPKELFKVPAHKIIGLTMPLSTLLKIRQERLATLGLPQTTNYSNMTTVGDELAYANQIFEQLNATTINVADRSIEETASLIQTLI</sequence>
<comment type="function">
    <text evidence="1">Bifunctional serine/threonine kinase and phosphorylase involved in the regulation of the pyruvate, phosphate dikinase (PPDK) by catalyzing its phosphorylation/dephosphorylation.</text>
</comment>
<comment type="catalytic activity">
    <reaction evidence="1">
        <text>N(tele)-phospho-L-histidyl/L-threonyl-[pyruvate, phosphate dikinase] + ADP = N(tele)-phospho-L-histidyl/O-phospho-L-threonyl-[pyruvate, phosphate dikinase] + AMP + H(+)</text>
        <dbReference type="Rhea" id="RHEA:43692"/>
        <dbReference type="Rhea" id="RHEA-COMP:10650"/>
        <dbReference type="Rhea" id="RHEA-COMP:10651"/>
        <dbReference type="ChEBI" id="CHEBI:15378"/>
        <dbReference type="ChEBI" id="CHEBI:30013"/>
        <dbReference type="ChEBI" id="CHEBI:61977"/>
        <dbReference type="ChEBI" id="CHEBI:83586"/>
        <dbReference type="ChEBI" id="CHEBI:456215"/>
        <dbReference type="ChEBI" id="CHEBI:456216"/>
        <dbReference type="EC" id="2.7.11.32"/>
    </reaction>
</comment>
<comment type="catalytic activity">
    <reaction evidence="1">
        <text>N(tele)-phospho-L-histidyl/O-phospho-L-threonyl-[pyruvate, phosphate dikinase] + phosphate + H(+) = N(tele)-phospho-L-histidyl/L-threonyl-[pyruvate, phosphate dikinase] + diphosphate</text>
        <dbReference type="Rhea" id="RHEA:43696"/>
        <dbReference type="Rhea" id="RHEA-COMP:10650"/>
        <dbReference type="Rhea" id="RHEA-COMP:10651"/>
        <dbReference type="ChEBI" id="CHEBI:15378"/>
        <dbReference type="ChEBI" id="CHEBI:30013"/>
        <dbReference type="ChEBI" id="CHEBI:33019"/>
        <dbReference type="ChEBI" id="CHEBI:43474"/>
        <dbReference type="ChEBI" id="CHEBI:61977"/>
        <dbReference type="ChEBI" id="CHEBI:83586"/>
        <dbReference type="EC" id="2.7.4.27"/>
    </reaction>
</comment>
<comment type="similarity">
    <text evidence="1">Belongs to the pyruvate, phosphate/water dikinase regulatory protein family. PDRP subfamily.</text>
</comment>
<proteinExistence type="inferred from homology"/>
<dbReference type="EC" id="2.7.11.32" evidence="1"/>
<dbReference type="EC" id="2.7.4.27" evidence="1"/>
<dbReference type="EMBL" id="CR936503">
    <property type="protein sequence ID" value="CAI55444.1"/>
    <property type="molecule type" value="Genomic_DNA"/>
</dbReference>
<dbReference type="RefSeq" id="WP_011374842.1">
    <property type="nucleotide sequence ID" value="NC_007576.1"/>
</dbReference>
<dbReference type="SMR" id="Q38WI8"/>
<dbReference type="STRING" id="314315.LCA_1143"/>
<dbReference type="KEGG" id="lsa:LCA_1143"/>
<dbReference type="eggNOG" id="COG1806">
    <property type="taxonomic scope" value="Bacteria"/>
</dbReference>
<dbReference type="HOGENOM" id="CLU_046206_2_1_9"/>
<dbReference type="OrthoDB" id="9782201at2"/>
<dbReference type="Proteomes" id="UP000002707">
    <property type="component" value="Chromosome"/>
</dbReference>
<dbReference type="GO" id="GO:0043531">
    <property type="term" value="F:ADP binding"/>
    <property type="evidence" value="ECO:0007669"/>
    <property type="project" value="UniProtKB-UniRule"/>
</dbReference>
<dbReference type="GO" id="GO:0005524">
    <property type="term" value="F:ATP binding"/>
    <property type="evidence" value="ECO:0007669"/>
    <property type="project" value="InterPro"/>
</dbReference>
<dbReference type="GO" id="GO:0016776">
    <property type="term" value="F:phosphotransferase activity, phosphate group as acceptor"/>
    <property type="evidence" value="ECO:0007669"/>
    <property type="project" value="UniProtKB-UniRule"/>
</dbReference>
<dbReference type="GO" id="GO:0004674">
    <property type="term" value="F:protein serine/threonine kinase activity"/>
    <property type="evidence" value="ECO:0007669"/>
    <property type="project" value="UniProtKB-UniRule"/>
</dbReference>
<dbReference type="HAMAP" id="MF_00921">
    <property type="entry name" value="PDRP"/>
    <property type="match status" value="1"/>
</dbReference>
<dbReference type="InterPro" id="IPR005177">
    <property type="entry name" value="Kinase-pyrophosphorylase"/>
</dbReference>
<dbReference type="InterPro" id="IPR026565">
    <property type="entry name" value="PPDK_reg"/>
</dbReference>
<dbReference type="NCBIfam" id="NF003742">
    <property type="entry name" value="PRK05339.1"/>
    <property type="match status" value="1"/>
</dbReference>
<dbReference type="PANTHER" id="PTHR31756">
    <property type="entry name" value="PYRUVATE, PHOSPHATE DIKINASE REGULATORY PROTEIN 1, CHLOROPLASTIC"/>
    <property type="match status" value="1"/>
</dbReference>
<dbReference type="PANTHER" id="PTHR31756:SF3">
    <property type="entry name" value="PYRUVATE, PHOSPHATE DIKINASE REGULATORY PROTEIN 1, CHLOROPLASTIC"/>
    <property type="match status" value="1"/>
</dbReference>
<dbReference type="Pfam" id="PF03618">
    <property type="entry name" value="Kinase-PPPase"/>
    <property type="match status" value="1"/>
</dbReference>
<feature type="chain" id="PRO_0000316691" description="Putative pyruvate, phosphate dikinase regulatory protein 2">
    <location>
        <begin position="1"/>
        <end position="265"/>
    </location>
</feature>
<feature type="binding site" evidence="1">
    <location>
        <begin position="150"/>
        <end position="157"/>
    </location>
    <ligand>
        <name>ADP</name>
        <dbReference type="ChEBI" id="CHEBI:456216"/>
    </ligand>
</feature>
<name>PDRP2_LATSS</name>
<gene>
    <name type="ordered locus">LCA_1143</name>
</gene>
<reference key="1">
    <citation type="journal article" date="2005" name="Nat. Biotechnol.">
        <title>The complete genome sequence of the meat-borne lactic acid bacterium Lactobacillus sakei 23K.</title>
        <authorList>
            <person name="Chaillou S."/>
            <person name="Champomier-Verges M.-C."/>
            <person name="Cornet M."/>
            <person name="Crutz-Le Coq A.-M."/>
            <person name="Dudez A.-M."/>
            <person name="Martin V."/>
            <person name="Beaufils S."/>
            <person name="Darbon-Rongere E."/>
            <person name="Bossy R."/>
            <person name="Loux V."/>
            <person name="Zagorec M."/>
        </authorList>
    </citation>
    <scope>NUCLEOTIDE SEQUENCE [LARGE SCALE GENOMIC DNA]</scope>
    <source>
        <strain>23K</strain>
    </source>
</reference>